<organism>
    <name type="scientific">Aquifex aeolicus (strain VF5)</name>
    <dbReference type="NCBI Taxonomy" id="224324"/>
    <lineage>
        <taxon>Bacteria</taxon>
        <taxon>Pseudomonadati</taxon>
        <taxon>Aquificota</taxon>
        <taxon>Aquificia</taxon>
        <taxon>Aquificales</taxon>
        <taxon>Aquificaceae</taxon>
        <taxon>Aquifex</taxon>
    </lineage>
</organism>
<protein>
    <recommendedName>
        <fullName evidence="1">Large ribosomal subunit protein uL15</fullName>
    </recommendedName>
    <alternativeName>
        <fullName evidence="3">50S ribosomal protein L15</fullName>
    </alternativeName>
</protein>
<keyword id="KW-1185">Reference proteome</keyword>
<keyword id="KW-0687">Ribonucleoprotein</keyword>
<keyword id="KW-0689">Ribosomal protein</keyword>
<keyword id="KW-0694">RNA-binding</keyword>
<keyword id="KW-0699">rRNA-binding</keyword>
<evidence type="ECO:0000255" key="1">
    <source>
        <dbReference type="HAMAP-Rule" id="MF_01341"/>
    </source>
</evidence>
<evidence type="ECO:0000256" key="2">
    <source>
        <dbReference type="SAM" id="MobiDB-lite"/>
    </source>
</evidence>
<evidence type="ECO:0000305" key="3"/>
<feature type="chain" id="PRO_0000104664" description="Large ribosomal subunit protein uL15">
    <location>
        <begin position="1"/>
        <end position="149"/>
    </location>
</feature>
<feature type="region of interest" description="Disordered" evidence="2">
    <location>
        <begin position="1"/>
        <end position="64"/>
    </location>
</feature>
<feature type="compositionally biased region" description="Basic residues" evidence="2">
    <location>
        <begin position="31"/>
        <end position="40"/>
    </location>
</feature>
<gene>
    <name evidence="1" type="primary">rplO</name>
    <name type="ordered locus">aq_1642</name>
</gene>
<dbReference type="EMBL" id="AE000657">
    <property type="protein sequence ID" value="AAC07532.1"/>
    <property type="molecule type" value="Genomic_DNA"/>
</dbReference>
<dbReference type="PIR" id="H70441">
    <property type="entry name" value="H70441"/>
</dbReference>
<dbReference type="RefSeq" id="NP_214127.1">
    <property type="nucleotide sequence ID" value="NC_000918.1"/>
</dbReference>
<dbReference type="RefSeq" id="WP_010881064.1">
    <property type="nucleotide sequence ID" value="NC_000918.1"/>
</dbReference>
<dbReference type="SMR" id="O67561"/>
<dbReference type="FunCoup" id="O67561">
    <property type="interactions" value="507"/>
</dbReference>
<dbReference type="STRING" id="224324.aq_1642"/>
<dbReference type="EnsemblBacteria" id="AAC07532">
    <property type="protein sequence ID" value="AAC07532"/>
    <property type="gene ID" value="aq_1642"/>
</dbReference>
<dbReference type="KEGG" id="aae:aq_1642"/>
<dbReference type="PATRIC" id="fig|224324.8.peg.1267"/>
<dbReference type="eggNOG" id="COG0200">
    <property type="taxonomic scope" value="Bacteria"/>
</dbReference>
<dbReference type="HOGENOM" id="CLU_055188_4_2_0"/>
<dbReference type="InParanoid" id="O67561"/>
<dbReference type="OrthoDB" id="9810293at2"/>
<dbReference type="Proteomes" id="UP000000798">
    <property type="component" value="Chromosome"/>
</dbReference>
<dbReference type="GO" id="GO:0022625">
    <property type="term" value="C:cytosolic large ribosomal subunit"/>
    <property type="evidence" value="ECO:0000318"/>
    <property type="project" value="GO_Central"/>
</dbReference>
<dbReference type="GO" id="GO:0019843">
    <property type="term" value="F:rRNA binding"/>
    <property type="evidence" value="ECO:0007669"/>
    <property type="project" value="UniProtKB-UniRule"/>
</dbReference>
<dbReference type="GO" id="GO:0003735">
    <property type="term" value="F:structural constituent of ribosome"/>
    <property type="evidence" value="ECO:0000318"/>
    <property type="project" value="GO_Central"/>
</dbReference>
<dbReference type="GO" id="GO:0006412">
    <property type="term" value="P:translation"/>
    <property type="evidence" value="ECO:0007669"/>
    <property type="project" value="UniProtKB-UniRule"/>
</dbReference>
<dbReference type="FunFam" id="3.100.10.10:FF:000005">
    <property type="entry name" value="50S ribosomal protein L15"/>
    <property type="match status" value="1"/>
</dbReference>
<dbReference type="Gene3D" id="3.100.10.10">
    <property type="match status" value="1"/>
</dbReference>
<dbReference type="HAMAP" id="MF_01341">
    <property type="entry name" value="Ribosomal_uL15"/>
    <property type="match status" value="1"/>
</dbReference>
<dbReference type="InterPro" id="IPR030878">
    <property type="entry name" value="Ribosomal_uL15"/>
</dbReference>
<dbReference type="InterPro" id="IPR021131">
    <property type="entry name" value="Ribosomal_uL15/eL18"/>
</dbReference>
<dbReference type="InterPro" id="IPR036227">
    <property type="entry name" value="Ribosomal_uL15/eL18_sf"/>
</dbReference>
<dbReference type="InterPro" id="IPR005749">
    <property type="entry name" value="Ribosomal_uL15_bac-type"/>
</dbReference>
<dbReference type="InterPro" id="IPR001196">
    <property type="entry name" value="Ribosomal_uL15_CS"/>
</dbReference>
<dbReference type="NCBIfam" id="TIGR01071">
    <property type="entry name" value="rplO_bact"/>
    <property type="match status" value="1"/>
</dbReference>
<dbReference type="PANTHER" id="PTHR12934">
    <property type="entry name" value="50S RIBOSOMAL PROTEIN L15"/>
    <property type="match status" value="1"/>
</dbReference>
<dbReference type="PANTHER" id="PTHR12934:SF11">
    <property type="entry name" value="LARGE RIBOSOMAL SUBUNIT PROTEIN UL15M"/>
    <property type="match status" value="1"/>
</dbReference>
<dbReference type="Pfam" id="PF00828">
    <property type="entry name" value="Ribosomal_L27A"/>
    <property type="match status" value="1"/>
</dbReference>
<dbReference type="SUPFAM" id="SSF52080">
    <property type="entry name" value="Ribosomal proteins L15p and L18e"/>
    <property type="match status" value="1"/>
</dbReference>
<dbReference type="PROSITE" id="PS00475">
    <property type="entry name" value="RIBOSOMAL_L15"/>
    <property type="match status" value="1"/>
</dbReference>
<sequence length="149" mass="16572">MVELHDLQPHWGATKEKKRVGRGIGSGHGKTAGRGHKGQKSRSGDRKMPPYFEGGQTPLYMRIPKRGFKNPTRKEYTPVNVGVIDKLFEDGMEITPEVLASKGLCDEKDRVKILGDGELTKKFVIKAHAFSKSAKEKIEKAGGKWEIIS</sequence>
<name>RL15_AQUAE</name>
<reference key="1">
    <citation type="journal article" date="1998" name="Nature">
        <title>The complete genome of the hyperthermophilic bacterium Aquifex aeolicus.</title>
        <authorList>
            <person name="Deckert G."/>
            <person name="Warren P.V."/>
            <person name="Gaasterland T."/>
            <person name="Young W.G."/>
            <person name="Lenox A.L."/>
            <person name="Graham D.E."/>
            <person name="Overbeek R."/>
            <person name="Snead M.A."/>
            <person name="Keller M."/>
            <person name="Aujay M."/>
            <person name="Huber R."/>
            <person name="Feldman R.A."/>
            <person name="Short J.M."/>
            <person name="Olsen G.J."/>
            <person name="Swanson R.V."/>
        </authorList>
    </citation>
    <scope>NUCLEOTIDE SEQUENCE [LARGE SCALE GENOMIC DNA]</scope>
    <source>
        <strain>VF5</strain>
    </source>
</reference>
<comment type="function">
    <text evidence="1">Binds to the 23S rRNA.</text>
</comment>
<comment type="subunit">
    <text evidence="1">Part of the 50S ribosomal subunit.</text>
</comment>
<comment type="similarity">
    <text evidence="1">Belongs to the universal ribosomal protein uL15 family.</text>
</comment>
<proteinExistence type="inferred from homology"/>
<accession>O67561</accession>